<keyword id="KW-1185">Reference proteome</keyword>
<dbReference type="EMBL" id="L77117">
    <property type="protein sequence ID" value="AAB99125.1"/>
    <property type="molecule type" value="Genomic_DNA"/>
</dbReference>
<dbReference type="PIR" id="B64440">
    <property type="entry name" value="B64440"/>
</dbReference>
<dbReference type="RefSeq" id="WP_010870634.1">
    <property type="nucleotide sequence ID" value="NC_000909.1"/>
</dbReference>
<dbReference type="SMR" id="Q58523"/>
<dbReference type="FunCoup" id="Q58523">
    <property type="interactions" value="28"/>
</dbReference>
<dbReference type="STRING" id="243232.MJ_1123"/>
<dbReference type="PaxDb" id="243232-MJ_1123"/>
<dbReference type="EnsemblBacteria" id="AAB99125">
    <property type="protein sequence ID" value="AAB99125"/>
    <property type="gene ID" value="MJ_1123"/>
</dbReference>
<dbReference type="GeneID" id="1452019"/>
<dbReference type="KEGG" id="mja:MJ_1123"/>
<dbReference type="eggNOG" id="arCOG01773">
    <property type="taxonomic scope" value="Archaea"/>
</dbReference>
<dbReference type="HOGENOM" id="CLU_037990_14_1_2"/>
<dbReference type="InParanoid" id="Q58523"/>
<dbReference type="OrthoDB" id="1018at2157"/>
<dbReference type="PhylomeDB" id="Q58523"/>
<dbReference type="Proteomes" id="UP000000805">
    <property type="component" value="Chromosome"/>
</dbReference>
<dbReference type="GO" id="GO:0008168">
    <property type="term" value="F:methyltransferase activity"/>
    <property type="evidence" value="ECO:0000318"/>
    <property type="project" value="GO_Central"/>
</dbReference>
<dbReference type="GO" id="GO:0008757">
    <property type="term" value="F:S-adenosylmethionine-dependent methyltransferase activity"/>
    <property type="evidence" value="ECO:0007669"/>
    <property type="project" value="InterPro"/>
</dbReference>
<dbReference type="CDD" id="cd02440">
    <property type="entry name" value="AdoMet_MTases"/>
    <property type="match status" value="1"/>
</dbReference>
<dbReference type="Gene3D" id="3.40.50.150">
    <property type="entry name" value="Vaccinia Virus protein VP39"/>
    <property type="match status" value="1"/>
</dbReference>
<dbReference type="InterPro" id="IPR013216">
    <property type="entry name" value="Methyltransf_11"/>
</dbReference>
<dbReference type="InterPro" id="IPR029063">
    <property type="entry name" value="SAM-dependent_MTases_sf"/>
</dbReference>
<dbReference type="PANTHER" id="PTHR43591">
    <property type="entry name" value="METHYLTRANSFERASE"/>
    <property type="match status" value="1"/>
</dbReference>
<dbReference type="Pfam" id="PF08241">
    <property type="entry name" value="Methyltransf_11"/>
    <property type="match status" value="1"/>
</dbReference>
<dbReference type="SUPFAM" id="SSF53335">
    <property type="entry name" value="S-adenosyl-L-methionine-dependent methyltransferases"/>
    <property type="match status" value="1"/>
</dbReference>
<sequence>MNVFDKYAEEYDKWFDENEIIYKSEIEALKRHIPKGRGLEIGVGTGRFAKPFNIKIGVDISKEMAKIAEKRGIKVIIAKGEDLPFKDEEFDFFLINTVLEFAENPKKMIEEAKRVLKRGGKIIIGIIDRDSFLGKMYEEKKQKSKFYKDANFLSAKEVIEMLKELGFKNIKATQTIFKEIDKVDKVEVKEGYGEGGFVAISAEKI</sequence>
<reference key="1">
    <citation type="journal article" date="1996" name="Science">
        <title>Complete genome sequence of the methanogenic archaeon, Methanococcus jannaschii.</title>
        <authorList>
            <person name="Bult C.J."/>
            <person name="White O."/>
            <person name="Olsen G.J."/>
            <person name="Zhou L."/>
            <person name="Fleischmann R.D."/>
            <person name="Sutton G.G."/>
            <person name="Blake J.A."/>
            <person name="FitzGerald L.M."/>
            <person name="Clayton R.A."/>
            <person name="Gocayne J.D."/>
            <person name="Kerlavage A.R."/>
            <person name="Dougherty B.A."/>
            <person name="Tomb J.-F."/>
            <person name="Adams M.D."/>
            <person name="Reich C.I."/>
            <person name="Overbeek R."/>
            <person name="Kirkness E.F."/>
            <person name="Weinstock K.G."/>
            <person name="Merrick J.M."/>
            <person name="Glodek A."/>
            <person name="Scott J.L."/>
            <person name="Geoghagen N.S.M."/>
            <person name="Weidman J.F."/>
            <person name="Fuhrmann J.L."/>
            <person name="Nguyen D."/>
            <person name="Utterback T.R."/>
            <person name="Kelley J.M."/>
            <person name="Peterson J.D."/>
            <person name="Sadow P.W."/>
            <person name="Hanna M.C."/>
            <person name="Cotton M.D."/>
            <person name="Roberts K.M."/>
            <person name="Hurst M.A."/>
            <person name="Kaine B.P."/>
            <person name="Borodovsky M."/>
            <person name="Klenk H.-P."/>
            <person name="Fraser C.M."/>
            <person name="Smith H.O."/>
            <person name="Woese C.R."/>
            <person name="Venter J.C."/>
        </authorList>
    </citation>
    <scope>NUCLEOTIDE SEQUENCE [LARGE SCALE GENOMIC DNA]</scope>
    <source>
        <strain>ATCC 43067 / DSM 2661 / JAL-1 / JCM 10045 / NBRC 100440</strain>
    </source>
</reference>
<name>Y1123_METJA</name>
<comment type="similarity">
    <text evidence="1">To M.jannaschii MJ0638 and MJ1252 and M.tuberculosis Rv2003c.</text>
</comment>
<feature type="chain" id="PRO_0000107178" description="Uncharacterized protein MJ1123">
    <location>
        <begin position="1"/>
        <end position="205"/>
    </location>
</feature>
<evidence type="ECO:0000305" key="1"/>
<organism>
    <name type="scientific">Methanocaldococcus jannaschii (strain ATCC 43067 / DSM 2661 / JAL-1 / JCM 10045 / NBRC 100440)</name>
    <name type="common">Methanococcus jannaschii</name>
    <dbReference type="NCBI Taxonomy" id="243232"/>
    <lineage>
        <taxon>Archaea</taxon>
        <taxon>Methanobacteriati</taxon>
        <taxon>Methanobacteriota</taxon>
        <taxon>Methanomada group</taxon>
        <taxon>Methanococci</taxon>
        <taxon>Methanococcales</taxon>
        <taxon>Methanocaldococcaceae</taxon>
        <taxon>Methanocaldococcus</taxon>
    </lineage>
</organism>
<protein>
    <recommendedName>
        <fullName>Uncharacterized protein MJ1123</fullName>
    </recommendedName>
</protein>
<proteinExistence type="predicted"/>
<accession>Q58523</accession>
<gene>
    <name type="ordered locus">MJ1123</name>
</gene>